<organism>
    <name type="scientific">Neurospora crassa (strain ATCC 24698 / 74-OR23-1A / CBS 708.71 / DSM 1257 / FGSC 987)</name>
    <dbReference type="NCBI Taxonomy" id="367110"/>
    <lineage>
        <taxon>Eukaryota</taxon>
        <taxon>Fungi</taxon>
        <taxon>Dikarya</taxon>
        <taxon>Ascomycota</taxon>
        <taxon>Pezizomycotina</taxon>
        <taxon>Sordariomycetes</taxon>
        <taxon>Sordariomycetidae</taxon>
        <taxon>Sordariales</taxon>
        <taxon>Sordariaceae</taxon>
        <taxon>Neurospora</taxon>
    </lineage>
</organism>
<feature type="chain" id="PRO_0000455967" description="Woronin sorting complex protein">
    <location>
        <begin position="1"/>
        <end position="307"/>
    </location>
</feature>
<feature type="transmembrane region" description="Helical" evidence="2">
    <location>
        <begin position="106"/>
        <end position="125"/>
    </location>
</feature>
<feature type="transmembrane region" description="Helical" evidence="2">
    <location>
        <begin position="146"/>
        <end position="167"/>
    </location>
</feature>
<feature type="transmembrane region" description="Helical" evidence="2">
    <location>
        <begin position="207"/>
        <end position="227"/>
    </location>
</feature>
<feature type="region of interest" description="Disordered" evidence="3">
    <location>
        <begin position="241"/>
        <end position="307"/>
    </location>
</feature>
<feature type="compositionally biased region" description="Basic and acidic residues" evidence="3">
    <location>
        <begin position="241"/>
        <end position="264"/>
    </location>
</feature>
<feature type="compositionally biased region" description="Low complexity" evidence="3">
    <location>
        <begin position="266"/>
        <end position="278"/>
    </location>
</feature>
<feature type="mutagenesis site" description="Shows a slight defect in association with hex-1 assemblies." evidence="4">
    <original>R</original>
    <variation>Q</variation>
    <location>
        <position position="102"/>
    </location>
</feature>
<feature type="mutagenesis site" description="Leads to total defect in the production of asymmetrical nascent Woronin bodies and localizes uniformly in the peroxisome membrane." evidence="4">
    <original>R</original>
    <variation>W</variation>
    <location>
        <position position="102"/>
    </location>
</feature>
<comment type="function">
    <text evidence="4">Woronin sorting complex protein involved in both Woronin bodies (WB) formation and inherence (PubMed:18227279). Localizes to large peroxisome membranes where it self-assembles into detergent-resistant oligomers that envelop hex-1 assemblies, producing asymmetrical nascent WBs (PubMed:18227279). These structures are then delivered to the cell cortex, which permits partitioning of the nascent WB and WB inheritance (PubMed:18227279).</text>
</comment>
<comment type="subunit">
    <text evidence="4">Self-assembles into detergent-resistant oligomers and forms a complex with hex-1 assemblies.</text>
</comment>
<comment type="subcellular location">
    <subcellularLocation>
        <location evidence="4">Peroxisome membrane</location>
        <topology evidence="1">Multi-pass membrane protein</topology>
    </subcellularLocation>
    <subcellularLocation>
        <location evidence="4">Cell septum</location>
    </subcellularLocation>
    <text evidence="4">Localizes to nascent and mature Woronin bodies, fungal-specific organelles that plug the septal pore in case of physical damage.</text>
</comment>
<comment type="disruption phenotype">
    <text evidence="4">Impairs the recruitment of hex-1 assemblies to the matrix face of the peroxisome membrane, and the subsequent production of Woronin bodies.</text>
</comment>
<comment type="similarity">
    <text evidence="6">Belongs to the peroxisomal membrane protein PXMP2/4 family.</text>
</comment>
<accession>U9W802</accession>
<evidence type="ECO:0000255" key="1"/>
<evidence type="ECO:0000255" key="2">
    <source>
        <dbReference type="RuleBase" id="RU363053"/>
    </source>
</evidence>
<evidence type="ECO:0000256" key="3">
    <source>
        <dbReference type="SAM" id="MobiDB-lite"/>
    </source>
</evidence>
<evidence type="ECO:0000269" key="4">
    <source>
    </source>
</evidence>
<evidence type="ECO:0000303" key="5">
    <source>
    </source>
</evidence>
<evidence type="ECO:0000305" key="6"/>
<reference key="1">
    <citation type="journal article" date="2003" name="Nature">
        <title>The genome sequence of the filamentous fungus Neurospora crassa.</title>
        <authorList>
            <person name="Galagan J.E."/>
            <person name="Calvo S.E."/>
            <person name="Borkovich K.A."/>
            <person name="Selker E.U."/>
            <person name="Read N.D."/>
            <person name="Jaffe D.B."/>
            <person name="FitzHugh W."/>
            <person name="Ma L.-J."/>
            <person name="Smirnov S."/>
            <person name="Purcell S."/>
            <person name="Rehman B."/>
            <person name="Elkins T."/>
            <person name="Engels R."/>
            <person name="Wang S."/>
            <person name="Nielsen C.B."/>
            <person name="Butler J."/>
            <person name="Endrizzi M."/>
            <person name="Qui D."/>
            <person name="Ianakiev P."/>
            <person name="Bell-Pedersen D."/>
            <person name="Nelson M.A."/>
            <person name="Werner-Washburne M."/>
            <person name="Selitrennikoff C.P."/>
            <person name="Kinsey J.A."/>
            <person name="Braun E.L."/>
            <person name="Zelter A."/>
            <person name="Schulte U."/>
            <person name="Kothe G.O."/>
            <person name="Jedd G."/>
            <person name="Mewes H.-W."/>
            <person name="Staben C."/>
            <person name="Marcotte E."/>
            <person name="Greenberg D."/>
            <person name="Roy A."/>
            <person name="Foley K."/>
            <person name="Naylor J."/>
            <person name="Stange-Thomann N."/>
            <person name="Barrett R."/>
            <person name="Gnerre S."/>
            <person name="Kamal M."/>
            <person name="Kamvysselis M."/>
            <person name="Mauceli E.W."/>
            <person name="Bielke C."/>
            <person name="Rudd S."/>
            <person name="Frishman D."/>
            <person name="Krystofova S."/>
            <person name="Rasmussen C."/>
            <person name="Metzenberg R.L."/>
            <person name="Perkins D.D."/>
            <person name="Kroken S."/>
            <person name="Cogoni C."/>
            <person name="Macino G."/>
            <person name="Catcheside D.E.A."/>
            <person name="Li W."/>
            <person name="Pratt R.J."/>
            <person name="Osmani S.A."/>
            <person name="DeSouza C.P.C."/>
            <person name="Glass N.L."/>
            <person name="Orbach M.J."/>
            <person name="Berglund J.A."/>
            <person name="Voelker R."/>
            <person name="Yarden O."/>
            <person name="Plamann M."/>
            <person name="Seiler S."/>
            <person name="Dunlap J.C."/>
            <person name="Radford A."/>
            <person name="Aramayo R."/>
            <person name="Natvig D.O."/>
            <person name="Alex L.A."/>
            <person name="Mannhaupt G."/>
            <person name="Ebbole D.J."/>
            <person name="Freitag M."/>
            <person name="Paulsen I."/>
            <person name="Sachs M.S."/>
            <person name="Lander E.S."/>
            <person name="Nusbaum C."/>
            <person name="Birren B.W."/>
        </authorList>
    </citation>
    <scope>NUCLEOTIDE SEQUENCE [LARGE SCALE GENOMIC DNA]</scope>
    <source>
        <strain>ATCC 24698 / 74-OR23-1A / CBS 708.71 / DSM 1257 / FGSC 987</strain>
    </source>
</reference>
<reference key="2">
    <citation type="journal article" date="2008" name="J. Cell Biol.">
        <title>Making two organelles from one: Woronin body biogenesis by peroxisomal protein sorting.</title>
        <authorList>
            <person name="Liu F."/>
            <person name="Ng S.K."/>
            <person name="Lu Y."/>
            <person name="Low W."/>
            <person name="Lai J."/>
            <person name="Jedd G."/>
        </authorList>
    </citation>
    <scope>FUNCTION</scope>
    <scope>DISRUPTION PHENOTYPE</scope>
    <scope>SUBCELLULAR LOCATION</scope>
    <scope>SUBUNIT</scope>
    <scope>MUTAGENESIS OF ARG-102</scope>
</reference>
<protein>
    <recommendedName>
        <fullName evidence="5">Woronin sorting complex protein</fullName>
    </recommendedName>
</protein>
<gene>
    <name evidence="5" type="primary">wsc</name>
    <name type="ORF">NCU07842</name>
</gene>
<proteinExistence type="evidence at protein level"/>
<sequence length="307" mass="33795">MSVKEHHSTVGAIAEAVAEAAHGDLPGTKGHHPISAVIGTAITGGRQNAGTKGYLTAYLKQLETNPLRTKMLTAGTLAGSQELLASWLAKDRNKNGNYFTARVPKMATYGALVSAPLGHFLIWILQKMFQNRKSLRAKILQILVSNLIVAPIQNSVYLVAMAIIAGAKTWKQVQATVRVGFWKVMKVSWLSSPLCLAFAQKFLPEAAWMPFFNLVSFFIGTYINYITKKKRLAALRRKHFGDGAHGDHRHDRERERDRERERHSSPPHGHGPSHGGRPINPTLGSHHGGGPVPPPQDYPSLGQNPRY</sequence>
<keyword id="KW-0472">Membrane</keyword>
<keyword id="KW-0576">Peroxisome</keyword>
<keyword id="KW-1185">Reference proteome</keyword>
<keyword id="KW-0812">Transmembrane</keyword>
<keyword id="KW-1133">Transmembrane helix</keyword>
<name>WSC_NEUCR</name>
<dbReference type="EMBL" id="CM002238">
    <property type="protein sequence ID" value="ESA43145.1"/>
    <property type="molecule type" value="Genomic_DNA"/>
</dbReference>
<dbReference type="RefSeq" id="XP_011393945.1">
    <property type="nucleotide sequence ID" value="XM_011395643.1"/>
</dbReference>
<dbReference type="STRING" id="367110.U9W802"/>
<dbReference type="PaxDb" id="5141-EFNCRP00000007466"/>
<dbReference type="EnsemblFungi" id="ESA43145">
    <property type="protein sequence ID" value="ESA43145"/>
    <property type="gene ID" value="NCU07842"/>
</dbReference>
<dbReference type="GeneID" id="3879267"/>
<dbReference type="KEGG" id="ncr:NCU07842"/>
<dbReference type="VEuPathDB" id="FungiDB:NCU07842"/>
<dbReference type="HOGENOM" id="CLU_066033_0_0_1"/>
<dbReference type="InParanoid" id="U9W802"/>
<dbReference type="OMA" id="KMAIYGA"/>
<dbReference type="OrthoDB" id="860at2759"/>
<dbReference type="Proteomes" id="UP000001805">
    <property type="component" value="Chromosome 3, Linkage Group III"/>
</dbReference>
<dbReference type="GO" id="GO:0030428">
    <property type="term" value="C:cell septum"/>
    <property type="evidence" value="ECO:0007669"/>
    <property type="project" value="UniProtKB-SubCell"/>
</dbReference>
<dbReference type="GO" id="GO:0005737">
    <property type="term" value="C:cytoplasm"/>
    <property type="evidence" value="ECO:0000318"/>
    <property type="project" value="GO_Central"/>
</dbReference>
<dbReference type="GO" id="GO:0005778">
    <property type="term" value="C:peroxisomal membrane"/>
    <property type="evidence" value="ECO:0000318"/>
    <property type="project" value="GO_Central"/>
</dbReference>
<dbReference type="GO" id="GO:0140266">
    <property type="term" value="C:Woronin body"/>
    <property type="evidence" value="ECO:0000314"/>
    <property type="project" value="GO_Central"/>
</dbReference>
<dbReference type="InterPro" id="IPR007248">
    <property type="entry name" value="Mpv17_PMP22"/>
</dbReference>
<dbReference type="PANTHER" id="PTHR11266:SF93">
    <property type="entry name" value="INTEGRAL MEMBRANE PROTEIN 25D9-6"/>
    <property type="match status" value="1"/>
</dbReference>
<dbReference type="PANTHER" id="PTHR11266">
    <property type="entry name" value="PEROXISOMAL MEMBRANE PROTEIN 2, PXMP2 MPV17"/>
    <property type="match status" value="1"/>
</dbReference>
<dbReference type="Pfam" id="PF04117">
    <property type="entry name" value="Mpv17_PMP22"/>
    <property type="match status" value="1"/>
</dbReference>